<protein>
    <recommendedName>
        <fullName>Protein arginine N-methyltransferase 1</fullName>
        <ecNumber evidence="3">2.1.1.319</ecNumber>
    </recommendedName>
</protein>
<accession>A2Z0C0</accession>
<comment type="function">
    <text evidence="2">Arginine methyltransferase that methylates (mono and asymmetric dimethylation) the guanidino nitrogens of arginyl residues present in target proteins.</text>
</comment>
<comment type="catalytic activity">
    <reaction evidence="3">
        <text>L-arginyl-[protein] + S-adenosyl-L-methionine = N(omega)-methyl-L-arginyl-[protein] + S-adenosyl-L-homocysteine + H(+)</text>
        <dbReference type="Rhea" id="RHEA:48100"/>
        <dbReference type="Rhea" id="RHEA-COMP:10532"/>
        <dbReference type="Rhea" id="RHEA-COMP:11990"/>
        <dbReference type="ChEBI" id="CHEBI:15378"/>
        <dbReference type="ChEBI" id="CHEBI:29965"/>
        <dbReference type="ChEBI" id="CHEBI:57856"/>
        <dbReference type="ChEBI" id="CHEBI:59789"/>
        <dbReference type="ChEBI" id="CHEBI:65280"/>
    </reaction>
    <physiologicalReaction direction="left-to-right" evidence="3">
        <dbReference type="Rhea" id="RHEA:48101"/>
    </physiologicalReaction>
</comment>
<comment type="catalytic activity">
    <reaction evidence="3">
        <text>L-arginyl-[protein] + 2 S-adenosyl-L-methionine = N(omega),N(omega)-dimethyl-L-arginyl-[protein] + 2 S-adenosyl-L-homocysteine + 2 H(+)</text>
        <dbReference type="Rhea" id="RHEA:48096"/>
        <dbReference type="Rhea" id="RHEA-COMP:10532"/>
        <dbReference type="Rhea" id="RHEA-COMP:11991"/>
        <dbReference type="ChEBI" id="CHEBI:15378"/>
        <dbReference type="ChEBI" id="CHEBI:29965"/>
        <dbReference type="ChEBI" id="CHEBI:57856"/>
        <dbReference type="ChEBI" id="CHEBI:59789"/>
        <dbReference type="ChEBI" id="CHEBI:61897"/>
        <dbReference type="EC" id="2.1.1.319"/>
    </reaction>
    <physiologicalReaction direction="left-to-right" evidence="3">
        <dbReference type="Rhea" id="RHEA:48097"/>
    </physiologicalReaction>
</comment>
<comment type="subcellular location">
    <subcellularLocation>
        <location evidence="1">Nucleus</location>
    </subcellularLocation>
</comment>
<comment type="similarity">
    <text evidence="5">Belongs to the class I-like SAM-binding methyltransferase superfamily. Protein arginine N-methyltransferase family.</text>
</comment>
<name>ANM1_ORYSI</name>
<dbReference type="EC" id="2.1.1.319" evidence="3"/>
<dbReference type="EMBL" id="CM000134">
    <property type="protein sequence ID" value="EAZ08781.1"/>
    <property type="molecule type" value="Genomic_DNA"/>
</dbReference>
<dbReference type="SMR" id="A2Z0C0"/>
<dbReference type="STRING" id="39946.A2Z0C0"/>
<dbReference type="iPTMnet" id="A2Z0C0"/>
<dbReference type="EnsemblPlants" id="BGIOSGA029907-TA">
    <property type="protein sequence ID" value="BGIOSGA029907-PA"/>
    <property type="gene ID" value="BGIOSGA029907"/>
</dbReference>
<dbReference type="EnsemblPlants" id="OsGoSa_09g0007100.01">
    <property type="protein sequence ID" value="OsGoSa_09g0007100.01"/>
    <property type="gene ID" value="OsGoSa_09g0007100"/>
</dbReference>
<dbReference type="EnsemblPlants" id="OsIR64_09g0007410.01">
    <property type="protein sequence ID" value="OsIR64_09g0007410.01"/>
    <property type="gene ID" value="OsIR64_09g0007410"/>
</dbReference>
<dbReference type="EnsemblPlants" id="OsLaMu_09g0007180.01">
    <property type="protein sequence ID" value="OsLaMu_09g0007180.01"/>
    <property type="gene ID" value="OsLaMu_09g0007180"/>
</dbReference>
<dbReference type="EnsemblPlants" id="OsLima_09g0007370.01">
    <property type="protein sequence ID" value="OsLima_09g0007370.01"/>
    <property type="gene ID" value="OsLima_09g0007370"/>
</dbReference>
<dbReference type="EnsemblPlants" id="OsLiXu_Ung0051020.01">
    <property type="protein sequence ID" value="OsLiXu_Ung0051020.01"/>
    <property type="gene ID" value="OsLiXu_Ung0051020"/>
</dbReference>
<dbReference type="EnsemblPlants" id="OsMH63_09G007770_01">
    <property type="protein sequence ID" value="OsMH63_09G007770_01"/>
    <property type="gene ID" value="OsMH63_09G007770"/>
</dbReference>
<dbReference type="EnsemblPlants" id="OsPr106_09g0007450.01">
    <property type="protein sequence ID" value="OsPr106_09g0007450.01"/>
    <property type="gene ID" value="OsPr106_09g0007450"/>
</dbReference>
<dbReference type="EnsemblPlants" id="OsZS97_09G007280_01">
    <property type="protein sequence ID" value="OsZS97_09G007280_01"/>
    <property type="gene ID" value="OsZS97_09G007280"/>
</dbReference>
<dbReference type="Gramene" id="BGIOSGA029907-TA">
    <property type="protein sequence ID" value="BGIOSGA029907-PA"/>
    <property type="gene ID" value="BGIOSGA029907"/>
</dbReference>
<dbReference type="Gramene" id="OsGoSa_09g0007100.01">
    <property type="protein sequence ID" value="OsGoSa_09g0007100.01"/>
    <property type="gene ID" value="OsGoSa_09g0007100"/>
</dbReference>
<dbReference type="Gramene" id="OsIR64_09g0007410.01">
    <property type="protein sequence ID" value="OsIR64_09g0007410.01"/>
    <property type="gene ID" value="OsIR64_09g0007410"/>
</dbReference>
<dbReference type="Gramene" id="OsLaMu_09g0007180.01">
    <property type="protein sequence ID" value="OsLaMu_09g0007180.01"/>
    <property type="gene ID" value="OsLaMu_09g0007180"/>
</dbReference>
<dbReference type="Gramene" id="OsLima_09g0007370.01">
    <property type="protein sequence ID" value="OsLima_09g0007370.01"/>
    <property type="gene ID" value="OsLima_09g0007370"/>
</dbReference>
<dbReference type="Gramene" id="OsLiXu_Ung0051020.01">
    <property type="protein sequence ID" value="OsLiXu_Ung0051020.01"/>
    <property type="gene ID" value="OsLiXu_Ung0051020"/>
</dbReference>
<dbReference type="Gramene" id="OsMH63_09G007770_01">
    <property type="protein sequence ID" value="OsMH63_09G007770_01"/>
    <property type="gene ID" value="OsMH63_09G007770"/>
</dbReference>
<dbReference type="Gramene" id="OsPr106_09g0007450.01">
    <property type="protein sequence ID" value="OsPr106_09g0007450.01"/>
    <property type="gene ID" value="OsPr106_09g0007450"/>
</dbReference>
<dbReference type="Gramene" id="OsZS97_09G007280_01">
    <property type="protein sequence ID" value="OsZS97_09G007280_01"/>
    <property type="gene ID" value="OsZS97_09G007280"/>
</dbReference>
<dbReference type="HOGENOM" id="CLU_017375_1_2_1"/>
<dbReference type="OMA" id="CTHTKVK"/>
<dbReference type="OrthoDB" id="7848332at2759"/>
<dbReference type="Proteomes" id="UP000007015">
    <property type="component" value="Chromosome 9"/>
</dbReference>
<dbReference type="GO" id="GO:0005634">
    <property type="term" value="C:nucleus"/>
    <property type="evidence" value="ECO:0007669"/>
    <property type="project" value="UniProtKB-SubCell"/>
</dbReference>
<dbReference type="GO" id="GO:0042054">
    <property type="term" value="F:histone methyltransferase activity"/>
    <property type="evidence" value="ECO:0007669"/>
    <property type="project" value="TreeGrafter"/>
</dbReference>
<dbReference type="GO" id="GO:0035242">
    <property type="term" value="F:protein-arginine omega-N asymmetric methyltransferase activity"/>
    <property type="evidence" value="ECO:0007669"/>
    <property type="project" value="RHEA"/>
</dbReference>
<dbReference type="GO" id="GO:0035241">
    <property type="term" value="F:protein-arginine omega-N monomethyltransferase activity"/>
    <property type="evidence" value="ECO:0007669"/>
    <property type="project" value="RHEA"/>
</dbReference>
<dbReference type="GO" id="GO:0032259">
    <property type="term" value="P:methylation"/>
    <property type="evidence" value="ECO:0007669"/>
    <property type="project" value="UniProtKB-KW"/>
</dbReference>
<dbReference type="CDD" id="cd02440">
    <property type="entry name" value="AdoMet_MTases"/>
    <property type="match status" value="1"/>
</dbReference>
<dbReference type="FunFam" id="2.70.160.11:FF:000001">
    <property type="entry name" value="Blast:Protein arginine N-methyltransferase 1"/>
    <property type="match status" value="1"/>
</dbReference>
<dbReference type="FunFam" id="3.40.50.150:FF:000116">
    <property type="entry name" value="probable protein arginine N-methyltransferase 1"/>
    <property type="match status" value="1"/>
</dbReference>
<dbReference type="Gene3D" id="2.70.160.11">
    <property type="entry name" value="Hnrnp arginine n-methyltransferase1"/>
    <property type="match status" value="1"/>
</dbReference>
<dbReference type="Gene3D" id="3.40.50.150">
    <property type="entry name" value="Vaccinia Virus protein VP39"/>
    <property type="match status" value="1"/>
</dbReference>
<dbReference type="InterPro" id="IPR025799">
    <property type="entry name" value="Arg_MeTrfase"/>
</dbReference>
<dbReference type="InterPro" id="IPR041698">
    <property type="entry name" value="Methyltransf_25"/>
</dbReference>
<dbReference type="InterPro" id="IPR055135">
    <property type="entry name" value="PRMT_dom"/>
</dbReference>
<dbReference type="InterPro" id="IPR029063">
    <property type="entry name" value="SAM-dependent_MTases_sf"/>
</dbReference>
<dbReference type="PANTHER" id="PTHR11006">
    <property type="entry name" value="PROTEIN ARGININE N-METHYLTRANSFERASE"/>
    <property type="match status" value="1"/>
</dbReference>
<dbReference type="PANTHER" id="PTHR11006:SF53">
    <property type="entry name" value="PROTEIN ARGININE N-METHYLTRANSFERASE 3"/>
    <property type="match status" value="1"/>
</dbReference>
<dbReference type="Pfam" id="PF13649">
    <property type="entry name" value="Methyltransf_25"/>
    <property type="match status" value="1"/>
</dbReference>
<dbReference type="Pfam" id="PF22528">
    <property type="entry name" value="PRMT_C"/>
    <property type="match status" value="1"/>
</dbReference>
<dbReference type="SUPFAM" id="SSF53335">
    <property type="entry name" value="S-adenosyl-L-methionine-dependent methyltransferases"/>
    <property type="match status" value="1"/>
</dbReference>
<dbReference type="PROSITE" id="PS51678">
    <property type="entry name" value="SAM_MT_PRMT"/>
    <property type="match status" value="1"/>
</dbReference>
<sequence>MDQRKGSGSDANGGLAEATASRLRFEDPDEVMEENPAAAAATVGAEEEGGEGGGGEEVIGSDKTSADYYFDSYSHFGIHEEMLKDVVRTKSYQNVITQNSFLFKDKIVLDVGAGTGILSLFCAKAGAKHVYAIECSQMADMAKEIVKTNGYSNVITVIKGKVEEIELPVPKVDVIISEWMGYFLLFENMLNTVLYARDKWLADGGVVLPDKASLHLTAIEDAEYKEDKIEFWNNVYGFDMRCIKKQAMMEPLVDTVDANQIVTNCQLLKTMDISKMTPGDASFTVPFKLVAERNDYIHALVAYFNVSFTKCHKMMGFSTGPRSKATHWKQTVLYLEDVLTICEGETITGSMTVTPNKKNPRDIDIKLCYALSGHRCQVSRTQHYKMR</sequence>
<proteinExistence type="inferred from homology"/>
<keyword id="KW-0489">Methyltransferase</keyword>
<keyword id="KW-0539">Nucleus</keyword>
<keyword id="KW-1185">Reference proteome</keyword>
<keyword id="KW-0949">S-adenosyl-L-methionine</keyword>
<keyword id="KW-0808">Transferase</keyword>
<feature type="chain" id="PRO_0000293988" description="Protein arginine N-methyltransferase 1">
    <location>
        <begin position="1"/>
        <end position="387"/>
    </location>
</feature>
<feature type="domain" description="SAM-dependent MTase PRMT-type" evidence="5">
    <location>
        <begin position="66"/>
        <end position="387"/>
    </location>
</feature>
<feature type="region of interest" description="Disordered" evidence="6">
    <location>
        <begin position="1"/>
        <end position="60"/>
    </location>
</feature>
<feature type="compositionally biased region" description="Low complexity" evidence="6">
    <location>
        <begin position="34"/>
        <end position="44"/>
    </location>
</feature>
<feature type="active site" evidence="4">
    <location>
        <position position="178"/>
    </location>
</feature>
<feature type="active site" evidence="4">
    <location>
        <position position="187"/>
    </location>
</feature>
<feature type="binding site" evidence="4">
    <location>
        <position position="79"/>
    </location>
    <ligand>
        <name>S-adenosyl-L-methionine</name>
        <dbReference type="ChEBI" id="CHEBI:59789"/>
    </ligand>
</feature>
<feature type="binding site" evidence="4">
    <location>
        <position position="88"/>
    </location>
    <ligand>
        <name>S-adenosyl-L-methionine</name>
        <dbReference type="ChEBI" id="CHEBI:59789"/>
    </ligand>
</feature>
<feature type="binding site" evidence="4">
    <location>
        <position position="112"/>
    </location>
    <ligand>
        <name>S-adenosyl-L-methionine</name>
        <dbReference type="ChEBI" id="CHEBI:59789"/>
    </ligand>
</feature>
<feature type="binding site" evidence="4">
    <location>
        <position position="134"/>
    </location>
    <ligand>
        <name>S-adenosyl-L-methionine</name>
        <dbReference type="ChEBI" id="CHEBI:59789"/>
    </ligand>
</feature>
<feature type="binding site" evidence="4">
    <location>
        <position position="163"/>
    </location>
    <ligand>
        <name>S-adenosyl-L-methionine</name>
        <dbReference type="ChEBI" id="CHEBI:59789"/>
    </ligand>
</feature>
<evidence type="ECO:0000250" key="1"/>
<evidence type="ECO:0000250" key="2">
    <source>
        <dbReference type="UniProtKB" id="A8IEF3"/>
    </source>
</evidence>
<evidence type="ECO:0000250" key="3">
    <source>
        <dbReference type="UniProtKB" id="P38074"/>
    </source>
</evidence>
<evidence type="ECO:0000250" key="4">
    <source>
        <dbReference type="UniProtKB" id="Q63009"/>
    </source>
</evidence>
<evidence type="ECO:0000255" key="5">
    <source>
        <dbReference type="PROSITE-ProRule" id="PRU01015"/>
    </source>
</evidence>
<evidence type="ECO:0000256" key="6">
    <source>
        <dbReference type="SAM" id="MobiDB-lite"/>
    </source>
</evidence>
<gene>
    <name type="primary">PRMT1</name>
    <name type="ORF">OsI_030013</name>
</gene>
<reference key="1">
    <citation type="journal article" date="2005" name="PLoS Biol.">
        <title>The genomes of Oryza sativa: a history of duplications.</title>
        <authorList>
            <person name="Yu J."/>
            <person name="Wang J."/>
            <person name="Lin W."/>
            <person name="Li S."/>
            <person name="Li H."/>
            <person name="Zhou J."/>
            <person name="Ni P."/>
            <person name="Dong W."/>
            <person name="Hu S."/>
            <person name="Zeng C."/>
            <person name="Zhang J."/>
            <person name="Zhang Y."/>
            <person name="Li R."/>
            <person name="Xu Z."/>
            <person name="Li S."/>
            <person name="Li X."/>
            <person name="Zheng H."/>
            <person name="Cong L."/>
            <person name="Lin L."/>
            <person name="Yin J."/>
            <person name="Geng J."/>
            <person name="Li G."/>
            <person name="Shi J."/>
            <person name="Liu J."/>
            <person name="Lv H."/>
            <person name="Li J."/>
            <person name="Wang J."/>
            <person name="Deng Y."/>
            <person name="Ran L."/>
            <person name="Shi X."/>
            <person name="Wang X."/>
            <person name="Wu Q."/>
            <person name="Li C."/>
            <person name="Ren X."/>
            <person name="Wang J."/>
            <person name="Wang X."/>
            <person name="Li D."/>
            <person name="Liu D."/>
            <person name="Zhang X."/>
            <person name="Ji Z."/>
            <person name="Zhao W."/>
            <person name="Sun Y."/>
            <person name="Zhang Z."/>
            <person name="Bao J."/>
            <person name="Han Y."/>
            <person name="Dong L."/>
            <person name="Ji J."/>
            <person name="Chen P."/>
            <person name="Wu S."/>
            <person name="Liu J."/>
            <person name="Xiao Y."/>
            <person name="Bu D."/>
            <person name="Tan J."/>
            <person name="Yang L."/>
            <person name="Ye C."/>
            <person name="Zhang J."/>
            <person name="Xu J."/>
            <person name="Zhou Y."/>
            <person name="Yu Y."/>
            <person name="Zhang B."/>
            <person name="Zhuang S."/>
            <person name="Wei H."/>
            <person name="Liu B."/>
            <person name="Lei M."/>
            <person name="Yu H."/>
            <person name="Li Y."/>
            <person name="Xu H."/>
            <person name="Wei S."/>
            <person name="He X."/>
            <person name="Fang L."/>
            <person name="Zhang Z."/>
            <person name="Zhang Y."/>
            <person name="Huang X."/>
            <person name="Su Z."/>
            <person name="Tong W."/>
            <person name="Li J."/>
            <person name="Tong Z."/>
            <person name="Li S."/>
            <person name="Ye J."/>
            <person name="Wang L."/>
            <person name="Fang L."/>
            <person name="Lei T."/>
            <person name="Chen C.-S."/>
            <person name="Chen H.-C."/>
            <person name="Xu Z."/>
            <person name="Li H."/>
            <person name="Huang H."/>
            <person name="Zhang F."/>
            <person name="Xu H."/>
            <person name="Li N."/>
            <person name="Zhao C."/>
            <person name="Li S."/>
            <person name="Dong L."/>
            <person name="Huang Y."/>
            <person name="Li L."/>
            <person name="Xi Y."/>
            <person name="Qi Q."/>
            <person name="Li W."/>
            <person name="Zhang B."/>
            <person name="Hu W."/>
            <person name="Zhang Y."/>
            <person name="Tian X."/>
            <person name="Jiao Y."/>
            <person name="Liang X."/>
            <person name="Jin J."/>
            <person name="Gao L."/>
            <person name="Zheng W."/>
            <person name="Hao B."/>
            <person name="Liu S.-M."/>
            <person name="Wang W."/>
            <person name="Yuan L."/>
            <person name="Cao M."/>
            <person name="McDermott J."/>
            <person name="Samudrala R."/>
            <person name="Wang J."/>
            <person name="Wong G.K.-S."/>
            <person name="Yang H."/>
        </authorList>
    </citation>
    <scope>NUCLEOTIDE SEQUENCE [LARGE SCALE GENOMIC DNA]</scope>
    <source>
        <strain>cv. 93-11</strain>
    </source>
</reference>
<organism>
    <name type="scientific">Oryza sativa subsp. indica</name>
    <name type="common">Rice</name>
    <dbReference type="NCBI Taxonomy" id="39946"/>
    <lineage>
        <taxon>Eukaryota</taxon>
        <taxon>Viridiplantae</taxon>
        <taxon>Streptophyta</taxon>
        <taxon>Embryophyta</taxon>
        <taxon>Tracheophyta</taxon>
        <taxon>Spermatophyta</taxon>
        <taxon>Magnoliopsida</taxon>
        <taxon>Liliopsida</taxon>
        <taxon>Poales</taxon>
        <taxon>Poaceae</taxon>
        <taxon>BOP clade</taxon>
        <taxon>Oryzoideae</taxon>
        <taxon>Oryzeae</taxon>
        <taxon>Oryzinae</taxon>
        <taxon>Oryza</taxon>
        <taxon>Oryza sativa</taxon>
    </lineage>
</organism>